<organism>
    <name type="scientific">Escherichia coli O157:H7</name>
    <dbReference type="NCBI Taxonomy" id="83334"/>
    <lineage>
        <taxon>Bacteria</taxon>
        <taxon>Pseudomonadati</taxon>
        <taxon>Pseudomonadota</taxon>
        <taxon>Gammaproteobacteria</taxon>
        <taxon>Enterobacterales</taxon>
        <taxon>Enterobacteriaceae</taxon>
        <taxon>Escherichia</taxon>
    </lineage>
</organism>
<accession>Q8XDB2</accession>
<accession>Q7AG34</accession>
<dbReference type="EC" id="2.1.1.173" evidence="1"/>
<dbReference type="EC" id="2.1.1.264" evidence="1"/>
<dbReference type="EMBL" id="AE005174">
    <property type="protein sequence ID" value="AAG55434.1"/>
    <property type="molecule type" value="Genomic_DNA"/>
</dbReference>
<dbReference type="EMBL" id="BA000007">
    <property type="protein sequence ID" value="BAB34455.1"/>
    <property type="molecule type" value="Genomic_DNA"/>
</dbReference>
<dbReference type="PIR" id="F85621">
    <property type="entry name" value="F85621"/>
</dbReference>
<dbReference type="PIR" id="H90757">
    <property type="entry name" value="H90757"/>
</dbReference>
<dbReference type="RefSeq" id="NP_309059.1">
    <property type="nucleotide sequence ID" value="NC_002695.1"/>
</dbReference>
<dbReference type="SMR" id="Q8XDB2"/>
<dbReference type="STRING" id="155864.Z1298"/>
<dbReference type="GeneID" id="917780"/>
<dbReference type="KEGG" id="ece:Z1298"/>
<dbReference type="KEGG" id="ecs:ECs_1032"/>
<dbReference type="PATRIC" id="fig|386585.9.peg.1156"/>
<dbReference type="eggNOG" id="COG0116">
    <property type="taxonomic scope" value="Bacteria"/>
</dbReference>
<dbReference type="eggNOG" id="COG1092">
    <property type="taxonomic scope" value="Bacteria"/>
</dbReference>
<dbReference type="HOGENOM" id="CLU_014042_2_0_6"/>
<dbReference type="OMA" id="TYLNWAE"/>
<dbReference type="Proteomes" id="UP000000558">
    <property type="component" value="Chromosome"/>
</dbReference>
<dbReference type="Proteomes" id="UP000002519">
    <property type="component" value="Chromosome"/>
</dbReference>
<dbReference type="GO" id="GO:0005737">
    <property type="term" value="C:cytoplasm"/>
    <property type="evidence" value="ECO:0007669"/>
    <property type="project" value="UniProtKB-SubCell"/>
</dbReference>
<dbReference type="GO" id="GO:0052915">
    <property type="term" value="F:23S rRNA (guanine(2445)-N(2))-methyltransferase activity"/>
    <property type="evidence" value="ECO:0007669"/>
    <property type="project" value="UniProtKB-UniRule"/>
</dbReference>
<dbReference type="GO" id="GO:0003723">
    <property type="term" value="F:RNA binding"/>
    <property type="evidence" value="ECO:0007669"/>
    <property type="project" value="UniProtKB-KW"/>
</dbReference>
<dbReference type="GO" id="GO:0070043">
    <property type="term" value="F:rRNA (guanine-N7-)-methyltransferase activity"/>
    <property type="evidence" value="ECO:0007669"/>
    <property type="project" value="UniProtKB-UniRule"/>
</dbReference>
<dbReference type="CDD" id="cd02440">
    <property type="entry name" value="AdoMet_MTases"/>
    <property type="match status" value="1"/>
</dbReference>
<dbReference type="CDD" id="cd11715">
    <property type="entry name" value="THUMP_AdoMetMT"/>
    <property type="match status" value="1"/>
</dbReference>
<dbReference type="FunFam" id="3.30.750.80:FF:000001">
    <property type="entry name" value="Ribosomal RNA large subunit methyltransferase K/L"/>
    <property type="match status" value="1"/>
</dbReference>
<dbReference type="FunFam" id="3.40.50.150:FF:000039">
    <property type="entry name" value="Ribosomal RNA large subunit methyltransferase K/L"/>
    <property type="match status" value="1"/>
</dbReference>
<dbReference type="Gene3D" id="3.30.2130.30">
    <property type="match status" value="1"/>
</dbReference>
<dbReference type="Gene3D" id="3.30.750.80">
    <property type="entry name" value="RNA methyltransferase domain (HRMD) like"/>
    <property type="match status" value="1"/>
</dbReference>
<dbReference type="Gene3D" id="3.40.50.150">
    <property type="entry name" value="Vaccinia Virus protein VP39"/>
    <property type="match status" value="2"/>
</dbReference>
<dbReference type="HAMAP" id="MF_01858">
    <property type="entry name" value="23SrRNA_methyltr_KL"/>
    <property type="match status" value="1"/>
</dbReference>
<dbReference type="InterPro" id="IPR017244">
    <property type="entry name" value="23SrRNA_methyltr_KL"/>
</dbReference>
<dbReference type="InterPro" id="IPR002052">
    <property type="entry name" value="DNA_methylase_N6_adenine_CS"/>
</dbReference>
<dbReference type="InterPro" id="IPR000241">
    <property type="entry name" value="RlmKL-like_Mtase"/>
</dbReference>
<dbReference type="InterPro" id="IPR053943">
    <property type="entry name" value="RlmKL-like_Mtase_CS"/>
</dbReference>
<dbReference type="InterPro" id="IPR054170">
    <property type="entry name" value="RlmL_1st"/>
</dbReference>
<dbReference type="InterPro" id="IPR019614">
    <property type="entry name" value="SAM-dep_methyl-trfase"/>
</dbReference>
<dbReference type="InterPro" id="IPR029063">
    <property type="entry name" value="SAM-dependent_MTases_sf"/>
</dbReference>
<dbReference type="InterPro" id="IPR004114">
    <property type="entry name" value="THUMP_dom"/>
</dbReference>
<dbReference type="NCBIfam" id="NF008748">
    <property type="entry name" value="PRK11783.1"/>
    <property type="match status" value="1"/>
</dbReference>
<dbReference type="PANTHER" id="PTHR47313">
    <property type="entry name" value="RIBOSOMAL RNA LARGE SUBUNIT METHYLTRANSFERASE K/L"/>
    <property type="match status" value="1"/>
</dbReference>
<dbReference type="PANTHER" id="PTHR47313:SF1">
    <property type="entry name" value="RIBOSOMAL RNA LARGE SUBUNIT METHYLTRANSFERASE K_L"/>
    <property type="match status" value="1"/>
</dbReference>
<dbReference type="Pfam" id="PF10672">
    <property type="entry name" value="Methyltrans_SAM"/>
    <property type="match status" value="1"/>
</dbReference>
<dbReference type="Pfam" id="PF22020">
    <property type="entry name" value="RlmL_1st"/>
    <property type="match status" value="1"/>
</dbReference>
<dbReference type="Pfam" id="PF02926">
    <property type="entry name" value="THUMP"/>
    <property type="match status" value="1"/>
</dbReference>
<dbReference type="Pfam" id="PF01170">
    <property type="entry name" value="UPF0020"/>
    <property type="match status" value="1"/>
</dbReference>
<dbReference type="PIRSF" id="PIRSF037618">
    <property type="entry name" value="RNA_Mtase_bacteria_prd"/>
    <property type="match status" value="1"/>
</dbReference>
<dbReference type="PRINTS" id="PR00507">
    <property type="entry name" value="N12N6MTFRASE"/>
</dbReference>
<dbReference type="SMART" id="SM00981">
    <property type="entry name" value="THUMP"/>
    <property type="match status" value="1"/>
</dbReference>
<dbReference type="SUPFAM" id="SSF53335">
    <property type="entry name" value="S-adenosyl-L-methionine-dependent methyltransferases"/>
    <property type="match status" value="2"/>
</dbReference>
<dbReference type="PROSITE" id="PS51165">
    <property type="entry name" value="THUMP"/>
    <property type="match status" value="1"/>
</dbReference>
<dbReference type="PROSITE" id="PS01261">
    <property type="entry name" value="UPF0020"/>
    <property type="match status" value="1"/>
</dbReference>
<name>RLMKL_ECO57</name>
<reference key="1">
    <citation type="journal article" date="2001" name="Nature">
        <title>Genome sequence of enterohaemorrhagic Escherichia coli O157:H7.</title>
        <authorList>
            <person name="Perna N.T."/>
            <person name="Plunkett G. III"/>
            <person name="Burland V."/>
            <person name="Mau B."/>
            <person name="Glasner J.D."/>
            <person name="Rose D.J."/>
            <person name="Mayhew G.F."/>
            <person name="Evans P.S."/>
            <person name="Gregor J."/>
            <person name="Kirkpatrick H.A."/>
            <person name="Posfai G."/>
            <person name="Hackett J."/>
            <person name="Klink S."/>
            <person name="Boutin A."/>
            <person name="Shao Y."/>
            <person name="Miller L."/>
            <person name="Grotbeck E.J."/>
            <person name="Davis N.W."/>
            <person name="Lim A."/>
            <person name="Dimalanta E.T."/>
            <person name="Potamousis K."/>
            <person name="Apodaca J."/>
            <person name="Anantharaman T.S."/>
            <person name="Lin J."/>
            <person name="Yen G."/>
            <person name="Schwartz D.C."/>
            <person name="Welch R.A."/>
            <person name="Blattner F.R."/>
        </authorList>
    </citation>
    <scope>NUCLEOTIDE SEQUENCE [LARGE SCALE GENOMIC DNA]</scope>
    <source>
        <strain>O157:H7 / EDL933 / ATCC 700927 / EHEC</strain>
    </source>
</reference>
<reference key="2">
    <citation type="journal article" date="2001" name="DNA Res.">
        <title>Complete genome sequence of enterohemorrhagic Escherichia coli O157:H7 and genomic comparison with a laboratory strain K-12.</title>
        <authorList>
            <person name="Hayashi T."/>
            <person name="Makino K."/>
            <person name="Ohnishi M."/>
            <person name="Kurokawa K."/>
            <person name="Ishii K."/>
            <person name="Yokoyama K."/>
            <person name="Han C.-G."/>
            <person name="Ohtsubo E."/>
            <person name="Nakayama K."/>
            <person name="Murata T."/>
            <person name="Tanaka M."/>
            <person name="Tobe T."/>
            <person name="Iida T."/>
            <person name="Takami H."/>
            <person name="Honda T."/>
            <person name="Sasakawa C."/>
            <person name="Ogasawara N."/>
            <person name="Yasunaga T."/>
            <person name="Kuhara S."/>
            <person name="Shiba T."/>
            <person name="Hattori M."/>
            <person name="Shinagawa H."/>
        </authorList>
    </citation>
    <scope>NUCLEOTIDE SEQUENCE [LARGE SCALE GENOMIC DNA]</scope>
    <source>
        <strain>O157:H7 / Sakai / RIMD 0509952 / EHEC</strain>
    </source>
</reference>
<feature type="chain" id="PRO_0000366744" description="Ribosomal RNA large subunit methyltransferase K/L">
    <location>
        <begin position="1"/>
        <end position="702"/>
    </location>
</feature>
<feature type="domain" description="THUMP" evidence="1">
    <location>
        <begin position="43"/>
        <end position="154"/>
    </location>
</feature>
<proteinExistence type="inferred from homology"/>
<keyword id="KW-0963">Cytoplasm</keyword>
<keyword id="KW-0489">Methyltransferase</keyword>
<keyword id="KW-1185">Reference proteome</keyword>
<keyword id="KW-0694">RNA-binding</keyword>
<keyword id="KW-0698">rRNA processing</keyword>
<keyword id="KW-0949">S-adenosyl-L-methionine</keyword>
<keyword id="KW-0808">Transferase</keyword>
<evidence type="ECO:0000255" key="1">
    <source>
        <dbReference type="HAMAP-Rule" id="MF_01858"/>
    </source>
</evidence>
<gene>
    <name evidence="1" type="primary">rlmL</name>
    <name type="ordered locus">Z1298</name>
    <name type="ordered locus">ECs1032</name>
</gene>
<comment type="function">
    <text evidence="1">Specifically methylates the guanine in position 2445 (m2G2445) and the guanine in position 2069 (m7G2069) of 23S rRNA.</text>
</comment>
<comment type="catalytic activity">
    <reaction evidence="1">
        <text>guanosine(2445) in 23S rRNA + S-adenosyl-L-methionine = N(2)-methylguanosine(2445) in 23S rRNA + S-adenosyl-L-homocysteine + H(+)</text>
        <dbReference type="Rhea" id="RHEA:42740"/>
        <dbReference type="Rhea" id="RHEA-COMP:10215"/>
        <dbReference type="Rhea" id="RHEA-COMP:10216"/>
        <dbReference type="ChEBI" id="CHEBI:15378"/>
        <dbReference type="ChEBI" id="CHEBI:57856"/>
        <dbReference type="ChEBI" id="CHEBI:59789"/>
        <dbReference type="ChEBI" id="CHEBI:74269"/>
        <dbReference type="ChEBI" id="CHEBI:74481"/>
        <dbReference type="EC" id="2.1.1.173"/>
    </reaction>
</comment>
<comment type="catalytic activity">
    <reaction evidence="1">
        <text>guanosine(2069) in 23S rRNA + S-adenosyl-L-methionine = N(2)-methylguanosine(2069) in 23S rRNA + S-adenosyl-L-homocysteine + H(+)</text>
        <dbReference type="Rhea" id="RHEA:43772"/>
        <dbReference type="Rhea" id="RHEA-COMP:10688"/>
        <dbReference type="Rhea" id="RHEA-COMP:10689"/>
        <dbReference type="ChEBI" id="CHEBI:15378"/>
        <dbReference type="ChEBI" id="CHEBI:57856"/>
        <dbReference type="ChEBI" id="CHEBI:59789"/>
        <dbReference type="ChEBI" id="CHEBI:74269"/>
        <dbReference type="ChEBI" id="CHEBI:74481"/>
        <dbReference type="EC" id="2.1.1.264"/>
    </reaction>
</comment>
<comment type="subcellular location">
    <subcellularLocation>
        <location evidence="1">Cytoplasm</location>
    </subcellularLocation>
</comment>
<comment type="similarity">
    <text evidence="1">Belongs to the methyltransferase superfamily. RlmKL family.</text>
</comment>
<protein>
    <recommendedName>
        <fullName evidence="1">Ribosomal RNA large subunit methyltransferase K/L</fullName>
    </recommendedName>
    <domain>
        <recommendedName>
            <fullName evidence="1">23S rRNA m2G2445 methyltransferase</fullName>
            <ecNumber evidence="1">2.1.1.173</ecNumber>
        </recommendedName>
        <alternativeName>
            <fullName evidence="1">rRNA (guanine-N(2)-)-methyltransferase RlmL</fullName>
        </alternativeName>
    </domain>
    <domain>
        <recommendedName>
            <fullName evidence="1">23S rRNA m7G2069 methyltransferase</fullName>
            <ecNumber evidence="1">2.1.1.264</ecNumber>
        </recommendedName>
        <alternativeName>
            <fullName evidence="1">rRNA (guanine-N(7)-)-methyltransferase RlmK</fullName>
        </alternativeName>
    </domain>
</protein>
<sequence>MNSLFASTARGLEELLKTELENLGAVECQVVQGGVHFKGDTRLVYQSLMWSRLASRIMLPLGECKVYSDLDLYLGVQAINWTEMFNPGATFAVHFSGLNDTIRNSQYGAMKVKDAIVDAFTRKNLPRPNVDRDAPDIRVNVWLHKETASIALDLSGDGLHLRGYRDRAGIAPIKETLAAAIVMRSGWQPGTPLLDPMCGSGTLLIEAAMLATDRAPGLHRGRWGFSGWAQHDEAIWQEVKAEAQTRARKGLAEYSSHFYGSDSDARVIQRARTNARLAGIGELITFEVKDVAQLTNPLPKEPYGTVLSNPPYGERLDSEPALIALHSLLGRIMKNQFGGWNLSLFSASPDLLSCLQLRADKQYKAKNGPLDCVQKNYHVAESTPDSKPAMVAEDYANRLRKNLKKFEKWARQEGIECYRLYDADLPEYNVAVDRYADWVVVQEYAPPKTIDAHKARQRLFDIIAATISVLGIAPNKLVLKTRERQKGKNQYQKLGEKGEFLEVTEYNAHLWVNLTDYLDTGLFLDHRIARRMLGQMSKGKDFLNLFSYTGSATVHAGLGGARSTTTVDMSRTYLEWAERNLRLNGLTGRAHRLIQADCLAWLREANEQFDLIFIDPPTFSNSKRMEDAFDVQRDHLALMKDLKRLLRAGGTIMFSNNKRGFRMDLDGLAKLGLKAQEITQKTLSQDFARNRQIHNCWLITAA</sequence>